<evidence type="ECO:0000255" key="1">
    <source>
        <dbReference type="HAMAP-Rule" id="MF_01390"/>
    </source>
</evidence>
<feature type="chain" id="PRO_0000143507" description="Maturase K">
    <location>
        <begin position="1"/>
        <end position="508"/>
    </location>
</feature>
<proteinExistence type="inferred from homology"/>
<protein>
    <recommendedName>
        <fullName evidence="1">Maturase K</fullName>
    </recommendedName>
    <alternativeName>
        <fullName evidence="1">Intron maturase</fullName>
    </alternativeName>
</protein>
<gene>
    <name evidence="1" type="primary">matK</name>
</gene>
<comment type="function">
    <text evidence="1">Usually encoded in the trnK tRNA gene intron. Probably assists in splicing its own and other chloroplast group II introns.</text>
</comment>
<comment type="subcellular location">
    <subcellularLocation>
        <location>Plastid</location>
        <location>Chloroplast</location>
    </subcellularLocation>
</comment>
<comment type="similarity">
    <text evidence="1">Belongs to the intron maturase 2 family. MatK subfamily.</text>
</comment>
<reference key="1">
    <citation type="submission" date="2000-02" db="EMBL/GenBank/DDBJ databases">
        <title>Phylogenetic relationships of the aquatic angiosperm family Podostemaceae inferred from matK sequence data.</title>
        <authorList>
            <person name="Kita Y."/>
            <person name="Kato M."/>
        </authorList>
    </citation>
    <scope>NUCLEOTIDE SEQUENCE [GENOMIC DNA]</scope>
</reference>
<dbReference type="EMBL" id="AB038195">
    <property type="protein sequence ID" value="BAB83156.1"/>
    <property type="molecule type" value="Genomic_DNA"/>
</dbReference>
<dbReference type="GO" id="GO:0009507">
    <property type="term" value="C:chloroplast"/>
    <property type="evidence" value="ECO:0007669"/>
    <property type="project" value="UniProtKB-SubCell"/>
</dbReference>
<dbReference type="GO" id="GO:0003723">
    <property type="term" value="F:RNA binding"/>
    <property type="evidence" value="ECO:0007669"/>
    <property type="project" value="UniProtKB-KW"/>
</dbReference>
<dbReference type="GO" id="GO:0006397">
    <property type="term" value="P:mRNA processing"/>
    <property type="evidence" value="ECO:0007669"/>
    <property type="project" value="UniProtKB-KW"/>
</dbReference>
<dbReference type="GO" id="GO:0008380">
    <property type="term" value="P:RNA splicing"/>
    <property type="evidence" value="ECO:0007669"/>
    <property type="project" value="UniProtKB-UniRule"/>
</dbReference>
<dbReference type="GO" id="GO:0008033">
    <property type="term" value="P:tRNA processing"/>
    <property type="evidence" value="ECO:0007669"/>
    <property type="project" value="UniProtKB-KW"/>
</dbReference>
<dbReference type="HAMAP" id="MF_01390">
    <property type="entry name" value="MatK"/>
    <property type="match status" value="1"/>
</dbReference>
<dbReference type="InterPro" id="IPR024937">
    <property type="entry name" value="Domain_X"/>
</dbReference>
<dbReference type="InterPro" id="IPR002866">
    <property type="entry name" value="Maturase_MatK"/>
</dbReference>
<dbReference type="InterPro" id="IPR024942">
    <property type="entry name" value="Maturase_MatK_N"/>
</dbReference>
<dbReference type="PANTHER" id="PTHR34811">
    <property type="entry name" value="MATURASE K"/>
    <property type="match status" value="1"/>
</dbReference>
<dbReference type="PANTHER" id="PTHR34811:SF1">
    <property type="entry name" value="MATURASE K"/>
    <property type="match status" value="1"/>
</dbReference>
<dbReference type="Pfam" id="PF01348">
    <property type="entry name" value="Intron_maturas2"/>
    <property type="match status" value="1"/>
</dbReference>
<dbReference type="Pfam" id="PF01824">
    <property type="entry name" value="MatK_N"/>
    <property type="match status" value="1"/>
</dbReference>
<keyword id="KW-0150">Chloroplast</keyword>
<keyword id="KW-0507">mRNA processing</keyword>
<keyword id="KW-0934">Plastid</keyword>
<keyword id="KW-0694">RNA-binding</keyword>
<keyword id="KW-0819">tRNA processing</keyword>
<organism>
    <name type="scientific">Marathrum schiedeanum</name>
    <dbReference type="NCBI Taxonomy" id="116737"/>
    <lineage>
        <taxon>Eukaryota</taxon>
        <taxon>Viridiplantae</taxon>
        <taxon>Streptophyta</taxon>
        <taxon>Embryophyta</taxon>
        <taxon>Tracheophyta</taxon>
        <taxon>Spermatophyta</taxon>
        <taxon>Magnoliopsida</taxon>
        <taxon>eudicotyledons</taxon>
        <taxon>Gunneridae</taxon>
        <taxon>Pentapetalae</taxon>
        <taxon>rosids</taxon>
        <taxon>fabids</taxon>
        <taxon>Malpighiales</taxon>
        <taxon>Podostemaceae</taxon>
        <taxon>Podostemoideae</taxon>
        <taxon>Marathrum</taxon>
    </lineage>
</organism>
<sequence>MEEKKDPRYLDLVISRKNDLLYPLIFQEYIYTLVHDHNLFPTILLENLGYDKRFRFLIVKRLITQMYQQNHLSLSAANLKQNPYFLYNKVLYSQKISEGLSIIVEIPFSLQLETSFKNLELVRVQNLKSIHSIFPFLEDKFPYLNLVSDGLFSYPIHLEKLVQILRYWLKDPASLHFLRLFFHEYWNWSHPSFEKKNLISFEKRNLRLFVFLYNSYVYEYESILFFIRRQFFHLPSKPFRFFFERLYFYVKIENLTEVFSKGSPVTLELFKEPNIHYIRYQGKFFFAYKGMPLLMNKWKYYFVTLFQNHFDVWFQTDKIHINPLYKHSFHCVGYLLSLKWNPSVIRSQMLQNAFIIENTMKKMDILVPIILMIDSLSKMKFCNKIGHPVSKPTWTDLLDSDIIDRFVRLCNKISYFYSGSSKKKNLYQIHYILRFACLKPLARKPKSSVRAFFKKLGSSFLEELFLEXQISSLIFIRSSPRSSDRSNQSKVRFWYLDIISINEIINHE</sequence>
<name>MATK_MARSC</name>
<geneLocation type="chloroplast"/>
<accession>Q8WKK9</accession>